<feature type="chain" id="PRO_1000065719" description="N-succinylarginine dihydrolase">
    <location>
        <begin position="1"/>
        <end position="446"/>
    </location>
</feature>
<feature type="active site" evidence="1">
    <location>
        <position position="174"/>
    </location>
</feature>
<feature type="active site" evidence="1">
    <location>
        <position position="249"/>
    </location>
</feature>
<feature type="active site" description="Nucleophile" evidence="1">
    <location>
        <position position="370"/>
    </location>
</feature>
<feature type="binding site" evidence="1">
    <location>
        <begin position="19"/>
        <end position="28"/>
    </location>
    <ligand>
        <name>substrate</name>
    </ligand>
</feature>
<feature type="binding site" evidence="1">
    <location>
        <position position="110"/>
    </location>
    <ligand>
        <name>substrate</name>
    </ligand>
</feature>
<feature type="binding site" evidence="1">
    <location>
        <begin position="137"/>
        <end position="138"/>
    </location>
    <ligand>
        <name>substrate</name>
    </ligand>
</feature>
<feature type="binding site" evidence="1">
    <location>
        <position position="213"/>
    </location>
    <ligand>
        <name>substrate</name>
    </ligand>
</feature>
<feature type="binding site" evidence="1">
    <location>
        <position position="251"/>
    </location>
    <ligand>
        <name>substrate</name>
    </ligand>
</feature>
<feature type="binding site" evidence="1">
    <location>
        <position position="364"/>
    </location>
    <ligand>
        <name>substrate</name>
    </ligand>
</feature>
<dbReference type="EC" id="3.5.3.23" evidence="1"/>
<dbReference type="EMBL" id="CP000572">
    <property type="protein sequence ID" value="ABN89909.1"/>
    <property type="molecule type" value="Genomic_DNA"/>
</dbReference>
<dbReference type="RefSeq" id="WP_004192611.1">
    <property type="nucleotide sequence ID" value="NC_009076.1"/>
</dbReference>
<dbReference type="SMR" id="A3NXG1"/>
<dbReference type="GeneID" id="93060961"/>
<dbReference type="KEGG" id="bpl:BURPS1106A_2781"/>
<dbReference type="HOGENOM" id="CLU_053835_0_0_4"/>
<dbReference type="UniPathway" id="UPA00185">
    <property type="reaction ID" value="UER00280"/>
</dbReference>
<dbReference type="Proteomes" id="UP000006738">
    <property type="component" value="Chromosome I"/>
</dbReference>
<dbReference type="GO" id="GO:0009015">
    <property type="term" value="F:N-succinylarginine dihydrolase activity"/>
    <property type="evidence" value="ECO:0007669"/>
    <property type="project" value="UniProtKB-UniRule"/>
</dbReference>
<dbReference type="GO" id="GO:0019544">
    <property type="term" value="P:arginine catabolic process to glutamate"/>
    <property type="evidence" value="ECO:0007669"/>
    <property type="project" value="UniProtKB-UniRule"/>
</dbReference>
<dbReference type="GO" id="GO:0019545">
    <property type="term" value="P:arginine catabolic process to succinate"/>
    <property type="evidence" value="ECO:0007669"/>
    <property type="project" value="UniProtKB-UniRule"/>
</dbReference>
<dbReference type="Gene3D" id="3.75.10.20">
    <property type="entry name" value="Succinylarginine dihydrolase"/>
    <property type="match status" value="1"/>
</dbReference>
<dbReference type="HAMAP" id="MF_01172">
    <property type="entry name" value="AstB"/>
    <property type="match status" value="1"/>
</dbReference>
<dbReference type="InterPro" id="IPR037031">
    <property type="entry name" value="AstB_sf"/>
</dbReference>
<dbReference type="InterPro" id="IPR007079">
    <property type="entry name" value="SuccinylArg_d-Hdrlase_AstB"/>
</dbReference>
<dbReference type="NCBIfam" id="TIGR03241">
    <property type="entry name" value="arg_catab_astB"/>
    <property type="match status" value="1"/>
</dbReference>
<dbReference type="NCBIfam" id="NF009789">
    <property type="entry name" value="PRK13281.1"/>
    <property type="match status" value="1"/>
</dbReference>
<dbReference type="PANTHER" id="PTHR30420">
    <property type="entry name" value="N-SUCCINYLARGININE DIHYDROLASE"/>
    <property type="match status" value="1"/>
</dbReference>
<dbReference type="PANTHER" id="PTHR30420:SF2">
    <property type="entry name" value="N-SUCCINYLARGININE DIHYDROLASE"/>
    <property type="match status" value="1"/>
</dbReference>
<dbReference type="Pfam" id="PF04996">
    <property type="entry name" value="AstB"/>
    <property type="match status" value="1"/>
</dbReference>
<dbReference type="SUPFAM" id="SSF55909">
    <property type="entry name" value="Pentein"/>
    <property type="match status" value="1"/>
</dbReference>
<proteinExistence type="inferred from homology"/>
<sequence length="446" mass="48138">MNAKEANFDGLVGPTHNYAGLSFGNVASLSNEKSDANPKAAAKQGLRKMKQLADLGFAQGVLPPQERPSLRLLRELGFSGKDADVIAKAARQAPELLAAASSASAMWTANAATVSPSADTSDARVHFTPANLCSKLHRAIEHESTRRTLAAIFADEARFAVHDALPGTPALGDEGAANHTRFCAEYGAPGVEFFVYGRAEYRRGPEPTRFPARQTFEASRAVAHRHGLREEATIYAQQRPDVIDAGVFHNDVIAVGNRDTLFCHEHAFVDRQAVYDALAASLGALGAQLNVIEVPDRAVSVADAVGSYLFNSQLLAREDGTQMLVVPQECRENANVAAYLDALVAGNGPIRDVRVFDLRESMKNGGGPACLRLRVVLNDAERAAVKPNVWIGDALFASLDAWIDKHYRDRLSPVDLADPALLDESRTALDELTQILGLGSLYDFQR</sequence>
<protein>
    <recommendedName>
        <fullName evidence="1">N-succinylarginine dihydrolase</fullName>
        <ecNumber evidence="1">3.5.3.23</ecNumber>
    </recommendedName>
</protein>
<organism>
    <name type="scientific">Burkholderia pseudomallei (strain 1106a)</name>
    <dbReference type="NCBI Taxonomy" id="357348"/>
    <lineage>
        <taxon>Bacteria</taxon>
        <taxon>Pseudomonadati</taxon>
        <taxon>Pseudomonadota</taxon>
        <taxon>Betaproteobacteria</taxon>
        <taxon>Burkholderiales</taxon>
        <taxon>Burkholderiaceae</taxon>
        <taxon>Burkholderia</taxon>
        <taxon>pseudomallei group</taxon>
    </lineage>
</organism>
<accession>A3NXG1</accession>
<comment type="function">
    <text evidence="1">Catalyzes the hydrolysis of N(2)-succinylarginine into N(2)-succinylornithine, ammonia and CO(2).</text>
</comment>
<comment type="catalytic activity">
    <reaction evidence="1">
        <text>N(2)-succinyl-L-arginine + 2 H2O + 2 H(+) = N(2)-succinyl-L-ornithine + 2 NH4(+) + CO2</text>
        <dbReference type="Rhea" id="RHEA:19533"/>
        <dbReference type="ChEBI" id="CHEBI:15377"/>
        <dbReference type="ChEBI" id="CHEBI:15378"/>
        <dbReference type="ChEBI" id="CHEBI:16526"/>
        <dbReference type="ChEBI" id="CHEBI:28938"/>
        <dbReference type="ChEBI" id="CHEBI:58241"/>
        <dbReference type="ChEBI" id="CHEBI:58514"/>
        <dbReference type="EC" id="3.5.3.23"/>
    </reaction>
</comment>
<comment type="pathway">
    <text evidence="1">Amino-acid degradation; L-arginine degradation via AST pathway; L-glutamate and succinate from L-arginine: step 2/5.</text>
</comment>
<comment type="subunit">
    <text evidence="1">Homodimer.</text>
</comment>
<comment type="similarity">
    <text evidence="1">Belongs to the succinylarginine dihydrolase family.</text>
</comment>
<name>ASTB_BURP0</name>
<gene>
    <name evidence="1" type="primary">astB</name>
    <name type="ordered locus">BURPS1106A_2781</name>
</gene>
<evidence type="ECO:0000255" key="1">
    <source>
        <dbReference type="HAMAP-Rule" id="MF_01172"/>
    </source>
</evidence>
<reference key="1">
    <citation type="journal article" date="2010" name="Genome Biol. Evol.">
        <title>Continuing evolution of Burkholderia mallei through genome reduction and large-scale rearrangements.</title>
        <authorList>
            <person name="Losada L."/>
            <person name="Ronning C.M."/>
            <person name="DeShazer D."/>
            <person name="Woods D."/>
            <person name="Fedorova N."/>
            <person name="Kim H.S."/>
            <person name="Shabalina S.A."/>
            <person name="Pearson T.R."/>
            <person name="Brinkac L."/>
            <person name="Tan P."/>
            <person name="Nandi T."/>
            <person name="Crabtree J."/>
            <person name="Badger J."/>
            <person name="Beckstrom-Sternberg S."/>
            <person name="Saqib M."/>
            <person name="Schutzer S.E."/>
            <person name="Keim P."/>
            <person name="Nierman W.C."/>
        </authorList>
    </citation>
    <scope>NUCLEOTIDE SEQUENCE [LARGE SCALE GENOMIC DNA]</scope>
    <source>
        <strain>1106a</strain>
    </source>
</reference>
<keyword id="KW-0056">Arginine metabolism</keyword>
<keyword id="KW-0378">Hydrolase</keyword>